<comment type="function">
    <text evidence="1">Catalyzes the attachment of tyrosine to tRNA(Tyr) in a two-step reaction: tyrosine is first activated by ATP to form Tyr-AMP and then transferred to the acceptor end of tRNA(Tyr).</text>
</comment>
<comment type="catalytic activity">
    <reaction evidence="1">
        <text>tRNA(Tyr) + L-tyrosine + ATP = L-tyrosyl-tRNA(Tyr) + AMP + diphosphate + H(+)</text>
        <dbReference type="Rhea" id="RHEA:10220"/>
        <dbReference type="Rhea" id="RHEA-COMP:9706"/>
        <dbReference type="Rhea" id="RHEA-COMP:9707"/>
        <dbReference type="ChEBI" id="CHEBI:15378"/>
        <dbReference type="ChEBI" id="CHEBI:30616"/>
        <dbReference type="ChEBI" id="CHEBI:33019"/>
        <dbReference type="ChEBI" id="CHEBI:58315"/>
        <dbReference type="ChEBI" id="CHEBI:78442"/>
        <dbReference type="ChEBI" id="CHEBI:78536"/>
        <dbReference type="ChEBI" id="CHEBI:456215"/>
        <dbReference type="EC" id="6.1.1.1"/>
    </reaction>
</comment>
<comment type="subunit">
    <text evidence="1">Homodimer.</text>
</comment>
<comment type="subcellular location">
    <subcellularLocation>
        <location evidence="1">Cytoplasm</location>
    </subcellularLocation>
</comment>
<comment type="similarity">
    <text evidence="1">Belongs to the class-I aminoacyl-tRNA synthetase family. TyrS type 1 subfamily.</text>
</comment>
<protein>
    <recommendedName>
        <fullName evidence="1">Tyrosine--tRNA ligase</fullName>
        <ecNumber evidence="1">6.1.1.1</ecNumber>
    </recommendedName>
    <alternativeName>
        <fullName evidence="1">Tyrosyl-tRNA synthetase</fullName>
        <shortName evidence="1">TyrRS</shortName>
    </alternativeName>
</protein>
<accession>P0DG62</accession>
<accession>Q79YQ7</accession>
<accession>Q8K8W5</accession>
<proteinExistence type="inferred from homology"/>
<keyword id="KW-0030">Aminoacyl-tRNA synthetase</keyword>
<keyword id="KW-0067">ATP-binding</keyword>
<keyword id="KW-0963">Cytoplasm</keyword>
<keyword id="KW-0436">Ligase</keyword>
<keyword id="KW-0547">Nucleotide-binding</keyword>
<keyword id="KW-0648">Protein biosynthesis</keyword>
<keyword id="KW-0694">RNA-binding</keyword>
<organism>
    <name type="scientific">Streptococcus pyogenes serotype M3 (strain ATCC BAA-595 / MGAS315)</name>
    <dbReference type="NCBI Taxonomy" id="198466"/>
    <lineage>
        <taxon>Bacteria</taxon>
        <taxon>Bacillati</taxon>
        <taxon>Bacillota</taxon>
        <taxon>Bacilli</taxon>
        <taxon>Lactobacillales</taxon>
        <taxon>Streptococcaceae</taxon>
        <taxon>Streptococcus</taxon>
    </lineage>
</organism>
<evidence type="ECO:0000255" key="1">
    <source>
        <dbReference type="HAMAP-Rule" id="MF_02006"/>
    </source>
</evidence>
<gene>
    <name evidence="1" type="primary">tyrS</name>
    <name type="ordered locus">SpyM3_0073</name>
</gene>
<sequence>MNIFEELKARGLVFQTTDEQALVKALTEGQVSYYTGYDPTADSLHLGHLVAILTSRRLQLAGHKPYALVGGATGLIGDPSFKDAERSLQTKETVLEWSDKIKGQLSTFLDFENGDNKAELVNNYDWFSQISFIDFLRDVGKYFTVNYMMSKDSVKKRIETGISYTEFAYQIMQGYDFYELNDKHNVTLQIGGSDQWGNMTAGTELLRKKADKTGHVMTVPLITDSTGKKFGKSEGNAVWLDADKTSPYEMYQFWLNVMDDDAVRFLKIFTFLSLDEIAEIESQFNAARHERLAQKTLAREVVTLVHGEEAYKQALNITEQLFAGNIKNLSANELKQGLSNVPNYHVQSEDSLNLVDMLVTAGISPSKRQAREDVQNGAIYINGDRIQDLDYQLSNDDKIDDQLTVIRRGKKKYAVLTY</sequence>
<dbReference type="EC" id="6.1.1.1" evidence="1"/>
<dbReference type="EMBL" id="AE014074">
    <property type="protein sequence ID" value="AAM78680.1"/>
    <property type="molecule type" value="Genomic_DNA"/>
</dbReference>
<dbReference type="RefSeq" id="WP_011054110.1">
    <property type="nucleotide sequence ID" value="NC_004070.1"/>
</dbReference>
<dbReference type="SMR" id="P0DG62"/>
<dbReference type="KEGG" id="spg:SpyM3_0073"/>
<dbReference type="HOGENOM" id="CLU_024003_0_3_9"/>
<dbReference type="Proteomes" id="UP000000564">
    <property type="component" value="Chromosome"/>
</dbReference>
<dbReference type="GO" id="GO:0005829">
    <property type="term" value="C:cytosol"/>
    <property type="evidence" value="ECO:0007669"/>
    <property type="project" value="TreeGrafter"/>
</dbReference>
<dbReference type="GO" id="GO:0005524">
    <property type="term" value="F:ATP binding"/>
    <property type="evidence" value="ECO:0007669"/>
    <property type="project" value="UniProtKB-UniRule"/>
</dbReference>
<dbReference type="GO" id="GO:0003723">
    <property type="term" value="F:RNA binding"/>
    <property type="evidence" value="ECO:0007669"/>
    <property type="project" value="UniProtKB-KW"/>
</dbReference>
<dbReference type="GO" id="GO:0004831">
    <property type="term" value="F:tyrosine-tRNA ligase activity"/>
    <property type="evidence" value="ECO:0007669"/>
    <property type="project" value="UniProtKB-UniRule"/>
</dbReference>
<dbReference type="GO" id="GO:0006437">
    <property type="term" value="P:tyrosyl-tRNA aminoacylation"/>
    <property type="evidence" value="ECO:0007669"/>
    <property type="project" value="UniProtKB-UniRule"/>
</dbReference>
<dbReference type="CDD" id="cd00165">
    <property type="entry name" value="S4"/>
    <property type="match status" value="1"/>
</dbReference>
<dbReference type="CDD" id="cd00805">
    <property type="entry name" value="TyrRS_core"/>
    <property type="match status" value="1"/>
</dbReference>
<dbReference type="FunFam" id="1.10.240.10:FF:000001">
    <property type="entry name" value="Tyrosine--tRNA ligase"/>
    <property type="match status" value="1"/>
</dbReference>
<dbReference type="FunFam" id="3.40.50.620:FF:000008">
    <property type="entry name" value="Tyrosine--tRNA ligase"/>
    <property type="match status" value="1"/>
</dbReference>
<dbReference type="Gene3D" id="3.40.50.620">
    <property type="entry name" value="HUPs"/>
    <property type="match status" value="1"/>
</dbReference>
<dbReference type="Gene3D" id="3.10.290.10">
    <property type="entry name" value="RNA-binding S4 domain"/>
    <property type="match status" value="1"/>
</dbReference>
<dbReference type="Gene3D" id="1.10.240.10">
    <property type="entry name" value="Tyrosyl-Transfer RNA Synthetase"/>
    <property type="match status" value="1"/>
</dbReference>
<dbReference type="HAMAP" id="MF_02006">
    <property type="entry name" value="Tyr_tRNA_synth_type1"/>
    <property type="match status" value="1"/>
</dbReference>
<dbReference type="InterPro" id="IPR001412">
    <property type="entry name" value="aa-tRNA-synth_I_CS"/>
</dbReference>
<dbReference type="InterPro" id="IPR002305">
    <property type="entry name" value="aa-tRNA-synth_Ic"/>
</dbReference>
<dbReference type="InterPro" id="IPR014729">
    <property type="entry name" value="Rossmann-like_a/b/a_fold"/>
</dbReference>
<dbReference type="InterPro" id="IPR002942">
    <property type="entry name" value="S4_RNA-bd"/>
</dbReference>
<dbReference type="InterPro" id="IPR036986">
    <property type="entry name" value="S4_RNA-bd_sf"/>
</dbReference>
<dbReference type="InterPro" id="IPR054608">
    <property type="entry name" value="SYY-like_C"/>
</dbReference>
<dbReference type="InterPro" id="IPR002307">
    <property type="entry name" value="Tyr-tRNA-ligase"/>
</dbReference>
<dbReference type="InterPro" id="IPR024088">
    <property type="entry name" value="Tyr-tRNA-ligase_bac-type"/>
</dbReference>
<dbReference type="InterPro" id="IPR024107">
    <property type="entry name" value="Tyr-tRNA-ligase_bac_1"/>
</dbReference>
<dbReference type="NCBIfam" id="TIGR00234">
    <property type="entry name" value="tyrS"/>
    <property type="match status" value="1"/>
</dbReference>
<dbReference type="PANTHER" id="PTHR11766:SF0">
    <property type="entry name" value="TYROSINE--TRNA LIGASE, MITOCHONDRIAL"/>
    <property type="match status" value="1"/>
</dbReference>
<dbReference type="PANTHER" id="PTHR11766">
    <property type="entry name" value="TYROSYL-TRNA SYNTHETASE"/>
    <property type="match status" value="1"/>
</dbReference>
<dbReference type="Pfam" id="PF22421">
    <property type="entry name" value="SYY_C-terminal"/>
    <property type="match status" value="1"/>
</dbReference>
<dbReference type="Pfam" id="PF00579">
    <property type="entry name" value="tRNA-synt_1b"/>
    <property type="match status" value="1"/>
</dbReference>
<dbReference type="PRINTS" id="PR01040">
    <property type="entry name" value="TRNASYNTHTYR"/>
</dbReference>
<dbReference type="SMART" id="SM00363">
    <property type="entry name" value="S4"/>
    <property type="match status" value="1"/>
</dbReference>
<dbReference type="SUPFAM" id="SSF55174">
    <property type="entry name" value="Alpha-L RNA-binding motif"/>
    <property type="match status" value="1"/>
</dbReference>
<dbReference type="SUPFAM" id="SSF52374">
    <property type="entry name" value="Nucleotidylyl transferase"/>
    <property type="match status" value="1"/>
</dbReference>
<dbReference type="PROSITE" id="PS00178">
    <property type="entry name" value="AA_TRNA_LIGASE_I"/>
    <property type="match status" value="1"/>
</dbReference>
<dbReference type="PROSITE" id="PS50889">
    <property type="entry name" value="S4"/>
    <property type="match status" value="1"/>
</dbReference>
<reference key="1">
    <citation type="journal article" date="2002" name="Proc. Natl. Acad. Sci. U.S.A.">
        <title>Genome sequence of a serotype M3 strain of group A Streptococcus: phage-encoded toxins, the high-virulence phenotype, and clone emergence.</title>
        <authorList>
            <person name="Beres S.B."/>
            <person name="Sylva G.L."/>
            <person name="Barbian K.D."/>
            <person name="Lei B."/>
            <person name="Hoff J.S."/>
            <person name="Mammarella N.D."/>
            <person name="Liu M.-Y."/>
            <person name="Smoot J.C."/>
            <person name="Porcella S.F."/>
            <person name="Parkins L.D."/>
            <person name="Campbell D.S."/>
            <person name="Smith T.M."/>
            <person name="McCormick J.K."/>
            <person name="Leung D.Y.M."/>
            <person name="Schlievert P.M."/>
            <person name="Musser J.M."/>
        </authorList>
    </citation>
    <scope>NUCLEOTIDE SEQUENCE [LARGE SCALE GENOMIC DNA]</scope>
    <source>
        <strain>ATCC BAA-595 / MGAS315</strain>
    </source>
</reference>
<name>SYY_STRP3</name>
<feature type="chain" id="PRO_0000234793" description="Tyrosine--tRNA ligase">
    <location>
        <begin position="1"/>
        <end position="418"/>
    </location>
</feature>
<feature type="domain" description="S4 RNA-binding" evidence="1">
    <location>
        <begin position="352"/>
        <end position="418"/>
    </location>
</feature>
<feature type="short sequence motif" description="'HIGH' region">
    <location>
        <begin position="39"/>
        <end position="48"/>
    </location>
</feature>
<feature type="short sequence motif" description="'KMSKS' region">
    <location>
        <begin position="229"/>
        <end position="233"/>
    </location>
</feature>
<feature type="binding site" evidence="1">
    <location>
        <position position="34"/>
    </location>
    <ligand>
        <name>L-tyrosine</name>
        <dbReference type="ChEBI" id="CHEBI:58315"/>
    </ligand>
</feature>
<feature type="binding site" evidence="1">
    <location>
        <position position="169"/>
    </location>
    <ligand>
        <name>L-tyrosine</name>
        <dbReference type="ChEBI" id="CHEBI:58315"/>
    </ligand>
</feature>
<feature type="binding site" evidence="1">
    <location>
        <position position="173"/>
    </location>
    <ligand>
        <name>L-tyrosine</name>
        <dbReference type="ChEBI" id="CHEBI:58315"/>
    </ligand>
</feature>
<feature type="binding site" evidence="1">
    <location>
        <position position="232"/>
    </location>
    <ligand>
        <name>ATP</name>
        <dbReference type="ChEBI" id="CHEBI:30616"/>
    </ligand>
</feature>